<keyword id="KW-0001">2Fe-2S</keyword>
<keyword id="KW-0028">Amino-acid biosynthesis</keyword>
<keyword id="KW-0100">Branched-chain amino acid biosynthesis</keyword>
<keyword id="KW-0408">Iron</keyword>
<keyword id="KW-0411">Iron-sulfur</keyword>
<keyword id="KW-0456">Lyase</keyword>
<keyword id="KW-0460">Magnesium</keyword>
<keyword id="KW-0479">Metal-binding</keyword>
<gene>
    <name evidence="1" type="primary">ilvD</name>
    <name type="ordered locus">BURPS668_1020</name>
</gene>
<comment type="function">
    <text evidence="1">Functions in the biosynthesis of branched-chain amino acids. Catalyzes the dehydration of (2R,3R)-2,3-dihydroxy-3-methylpentanoate (2,3-dihydroxy-3-methylvalerate) into 2-oxo-3-methylpentanoate (2-oxo-3-methylvalerate) and of (2R)-2,3-dihydroxy-3-methylbutanoate (2,3-dihydroxyisovalerate) into 2-oxo-3-methylbutanoate (2-oxoisovalerate), the penultimate precursor to L-isoleucine and L-valine, respectively.</text>
</comment>
<comment type="catalytic activity">
    <reaction evidence="1">
        <text>(2R)-2,3-dihydroxy-3-methylbutanoate = 3-methyl-2-oxobutanoate + H2O</text>
        <dbReference type="Rhea" id="RHEA:24809"/>
        <dbReference type="ChEBI" id="CHEBI:11851"/>
        <dbReference type="ChEBI" id="CHEBI:15377"/>
        <dbReference type="ChEBI" id="CHEBI:49072"/>
        <dbReference type="EC" id="4.2.1.9"/>
    </reaction>
    <physiologicalReaction direction="left-to-right" evidence="1">
        <dbReference type="Rhea" id="RHEA:24810"/>
    </physiologicalReaction>
</comment>
<comment type="catalytic activity">
    <reaction evidence="1">
        <text>(2R,3R)-2,3-dihydroxy-3-methylpentanoate = (S)-3-methyl-2-oxopentanoate + H2O</text>
        <dbReference type="Rhea" id="RHEA:27694"/>
        <dbReference type="ChEBI" id="CHEBI:15377"/>
        <dbReference type="ChEBI" id="CHEBI:35146"/>
        <dbReference type="ChEBI" id="CHEBI:49258"/>
        <dbReference type="EC" id="4.2.1.9"/>
    </reaction>
    <physiologicalReaction direction="left-to-right" evidence="1">
        <dbReference type="Rhea" id="RHEA:27695"/>
    </physiologicalReaction>
</comment>
<comment type="cofactor">
    <cofactor evidence="1">
        <name>[2Fe-2S] cluster</name>
        <dbReference type="ChEBI" id="CHEBI:190135"/>
    </cofactor>
    <text evidence="1">Binds 1 [2Fe-2S] cluster per subunit. This cluster acts as a Lewis acid cofactor.</text>
</comment>
<comment type="cofactor">
    <cofactor evidence="1">
        <name>Mg(2+)</name>
        <dbReference type="ChEBI" id="CHEBI:18420"/>
    </cofactor>
</comment>
<comment type="pathway">
    <text evidence="1">Amino-acid biosynthesis; L-isoleucine biosynthesis; L-isoleucine from 2-oxobutanoate: step 3/4.</text>
</comment>
<comment type="pathway">
    <text evidence="1">Amino-acid biosynthesis; L-valine biosynthesis; L-valine from pyruvate: step 3/4.</text>
</comment>
<comment type="subunit">
    <text evidence="1">Homodimer.</text>
</comment>
<comment type="similarity">
    <text evidence="1">Belongs to the IlvD/Edd family.</text>
</comment>
<proteinExistence type="inferred from homology"/>
<dbReference type="EC" id="4.2.1.9" evidence="1"/>
<dbReference type="EMBL" id="CP000570">
    <property type="protein sequence ID" value="ABN83258.1"/>
    <property type="molecule type" value="Genomic_DNA"/>
</dbReference>
<dbReference type="RefSeq" id="WP_004191611.1">
    <property type="nucleotide sequence ID" value="NC_009074.1"/>
</dbReference>
<dbReference type="SMR" id="A3N6U9"/>
<dbReference type="GeneID" id="92978440"/>
<dbReference type="KEGG" id="bpd:BURPS668_1020"/>
<dbReference type="HOGENOM" id="CLU_014271_4_1_4"/>
<dbReference type="UniPathway" id="UPA00047">
    <property type="reaction ID" value="UER00057"/>
</dbReference>
<dbReference type="UniPathway" id="UPA00049">
    <property type="reaction ID" value="UER00061"/>
</dbReference>
<dbReference type="GO" id="GO:0051537">
    <property type="term" value="F:2 iron, 2 sulfur cluster binding"/>
    <property type="evidence" value="ECO:0007669"/>
    <property type="project" value="UniProtKB-UniRule"/>
</dbReference>
<dbReference type="GO" id="GO:0004160">
    <property type="term" value="F:dihydroxy-acid dehydratase activity"/>
    <property type="evidence" value="ECO:0007669"/>
    <property type="project" value="UniProtKB-UniRule"/>
</dbReference>
<dbReference type="GO" id="GO:0000287">
    <property type="term" value="F:magnesium ion binding"/>
    <property type="evidence" value="ECO:0007669"/>
    <property type="project" value="UniProtKB-UniRule"/>
</dbReference>
<dbReference type="GO" id="GO:0009097">
    <property type="term" value="P:isoleucine biosynthetic process"/>
    <property type="evidence" value="ECO:0007669"/>
    <property type="project" value="UniProtKB-UniRule"/>
</dbReference>
<dbReference type="GO" id="GO:0009099">
    <property type="term" value="P:L-valine biosynthetic process"/>
    <property type="evidence" value="ECO:0007669"/>
    <property type="project" value="UniProtKB-UniRule"/>
</dbReference>
<dbReference type="FunFam" id="3.50.30.80:FF:000001">
    <property type="entry name" value="Dihydroxy-acid dehydratase"/>
    <property type="match status" value="1"/>
</dbReference>
<dbReference type="Gene3D" id="3.50.30.80">
    <property type="entry name" value="IlvD/EDD C-terminal domain-like"/>
    <property type="match status" value="1"/>
</dbReference>
<dbReference type="HAMAP" id="MF_00012">
    <property type="entry name" value="IlvD"/>
    <property type="match status" value="1"/>
</dbReference>
<dbReference type="InterPro" id="IPR050165">
    <property type="entry name" value="DHAD_IlvD/Edd"/>
</dbReference>
<dbReference type="InterPro" id="IPR042096">
    <property type="entry name" value="Dihydro-acid_dehy_C"/>
</dbReference>
<dbReference type="InterPro" id="IPR004404">
    <property type="entry name" value="DihydroxyA_deHydtase"/>
</dbReference>
<dbReference type="InterPro" id="IPR020558">
    <property type="entry name" value="DiOHA_6PGluconate_deHydtase_CS"/>
</dbReference>
<dbReference type="InterPro" id="IPR056740">
    <property type="entry name" value="ILV_EDD_C"/>
</dbReference>
<dbReference type="InterPro" id="IPR000581">
    <property type="entry name" value="ILV_EDD_N"/>
</dbReference>
<dbReference type="InterPro" id="IPR037237">
    <property type="entry name" value="IlvD/EDD_N"/>
</dbReference>
<dbReference type="NCBIfam" id="TIGR00110">
    <property type="entry name" value="ilvD"/>
    <property type="match status" value="1"/>
</dbReference>
<dbReference type="NCBIfam" id="NF002068">
    <property type="entry name" value="PRK00911.1"/>
    <property type="match status" value="1"/>
</dbReference>
<dbReference type="PANTHER" id="PTHR21000">
    <property type="entry name" value="DIHYDROXY-ACID DEHYDRATASE DAD"/>
    <property type="match status" value="1"/>
</dbReference>
<dbReference type="PANTHER" id="PTHR21000:SF5">
    <property type="entry name" value="DIHYDROXY-ACID DEHYDRATASE, MITOCHONDRIAL"/>
    <property type="match status" value="1"/>
</dbReference>
<dbReference type="Pfam" id="PF24877">
    <property type="entry name" value="ILV_EDD_C"/>
    <property type="match status" value="1"/>
</dbReference>
<dbReference type="Pfam" id="PF00920">
    <property type="entry name" value="ILVD_EDD_N"/>
    <property type="match status" value="1"/>
</dbReference>
<dbReference type="SUPFAM" id="SSF143975">
    <property type="entry name" value="IlvD/EDD N-terminal domain-like"/>
    <property type="match status" value="1"/>
</dbReference>
<dbReference type="SUPFAM" id="SSF52016">
    <property type="entry name" value="LeuD/IlvD-like"/>
    <property type="match status" value="1"/>
</dbReference>
<dbReference type="PROSITE" id="PS00886">
    <property type="entry name" value="ILVD_EDD_1"/>
    <property type="match status" value="1"/>
</dbReference>
<dbReference type="PROSITE" id="PS00887">
    <property type="entry name" value="ILVD_EDD_2"/>
    <property type="match status" value="1"/>
</dbReference>
<sequence length="557" mass="59039">MSYNRRSKNITQGVARSPNRSMYYALGYQKEDFDKPMIGIANGHSTITPCNAGLQRLSDAAVAAVKDAGANPQIFGTPTISDGMSMGTEGMKYSLVSREVIADCIETCVQGQWMDGVVVVGGCDKNMPGGMIALARINVPGIYVYGGTIRPGHWKGHDLTIVSSFEAVGEFTAGRMSQEDFEGVEKNACPTTGSCGGMYTANTMSSSFEALGMSLLYSSTMANPDQEKVDSAAESARVLVEAVKKDLKPRDIITKQSIENAVSVIMATGGSTNAVLHYLAIAHAAEIDWSIEDFERIRKRVPVICDLKPSGQYVATDLHAAGGIPQVMKLLLDAGLLHGDCMTITGRTLAEELKDVPSVPRADQKVIHPIDQALYKEGHLAILKGNLAEDGAVAKITGLKNPVITGPARVFDDEQSALAAILDDRIRAGDVVVLRYLGPQGGPGMPEMLAPTSAIIGKGLGESVGLITDGRFSGGTWGMVVGHVAPEAFVGGTIALVQEGDSITIDAHKLLLQLNVDDAELARRRAAWKQPAPRYTRGVLAKYAALARPANQGAVTG</sequence>
<evidence type="ECO:0000255" key="1">
    <source>
        <dbReference type="HAMAP-Rule" id="MF_00012"/>
    </source>
</evidence>
<accession>A3N6U9</accession>
<name>ILVD_BURP6</name>
<reference key="1">
    <citation type="journal article" date="2010" name="Genome Biol. Evol.">
        <title>Continuing evolution of Burkholderia mallei through genome reduction and large-scale rearrangements.</title>
        <authorList>
            <person name="Losada L."/>
            <person name="Ronning C.M."/>
            <person name="DeShazer D."/>
            <person name="Woods D."/>
            <person name="Fedorova N."/>
            <person name="Kim H.S."/>
            <person name="Shabalina S.A."/>
            <person name="Pearson T.R."/>
            <person name="Brinkac L."/>
            <person name="Tan P."/>
            <person name="Nandi T."/>
            <person name="Crabtree J."/>
            <person name="Badger J."/>
            <person name="Beckstrom-Sternberg S."/>
            <person name="Saqib M."/>
            <person name="Schutzer S.E."/>
            <person name="Keim P."/>
            <person name="Nierman W.C."/>
        </authorList>
    </citation>
    <scope>NUCLEOTIDE SEQUENCE [LARGE SCALE GENOMIC DNA]</scope>
    <source>
        <strain>668</strain>
    </source>
</reference>
<feature type="chain" id="PRO_1000000965" description="Dihydroxy-acid dehydratase">
    <location>
        <begin position="1"/>
        <end position="557"/>
    </location>
</feature>
<feature type="active site" description="Proton acceptor" evidence="1">
    <location>
        <position position="473"/>
    </location>
</feature>
<feature type="binding site" evidence="1">
    <location>
        <position position="50"/>
    </location>
    <ligand>
        <name>[2Fe-2S] cluster</name>
        <dbReference type="ChEBI" id="CHEBI:190135"/>
    </ligand>
</feature>
<feature type="binding site" evidence="1">
    <location>
        <position position="82"/>
    </location>
    <ligand>
        <name>Mg(2+)</name>
        <dbReference type="ChEBI" id="CHEBI:18420"/>
    </ligand>
</feature>
<feature type="binding site" evidence="1">
    <location>
        <position position="123"/>
    </location>
    <ligand>
        <name>[2Fe-2S] cluster</name>
        <dbReference type="ChEBI" id="CHEBI:190135"/>
    </ligand>
</feature>
<feature type="binding site" evidence="1">
    <location>
        <position position="124"/>
    </location>
    <ligand>
        <name>Mg(2+)</name>
        <dbReference type="ChEBI" id="CHEBI:18420"/>
    </ligand>
</feature>
<feature type="binding site" description="via carbamate group" evidence="1">
    <location>
        <position position="125"/>
    </location>
    <ligand>
        <name>Mg(2+)</name>
        <dbReference type="ChEBI" id="CHEBI:18420"/>
    </ligand>
</feature>
<feature type="binding site" evidence="1">
    <location>
        <position position="195"/>
    </location>
    <ligand>
        <name>[2Fe-2S] cluster</name>
        <dbReference type="ChEBI" id="CHEBI:190135"/>
    </ligand>
</feature>
<feature type="binding site" evidence="1">
    <location>
        <position position="447"/>
    </location>
    <ligand>
        <name>Mg(2+)</name>
        <dbReference type="ChEBI" id="CHEBI:18420"/>
    </ligand>
</feature>
<feature type="modified residue" description="N6-carboxylysine" evidence="1">
    <location>
        <position position="125"/>
    </location>
</feature>
<protein>
    <recommendedName>
        <fullName evidence="1">Dihydroxy-acid dehydratase</fullName>
        <shortName evidence="1">DAD</shortName>
        <ecNumber evidence="1">4.2.1.9</ecNumber>
    </recommendedName>
</protein>
<organism>
    <name type="scientific">Burkholderia pseudomallei (strain 668)</name>
    <dbReference type="NCBI Taxonomy" id="320373"/>
    <lineage>
        <taxon>Bacteria</taxon>
        <taxon>Pseudomonadati</taxon>
        <taxon>Pseudomonadota</taxon>
        <taxon>Betaproteobacteria</taxon>
        <taxon>Burkholderiales</taxon>
        <taxon>Burkholderiaceae</taxon>
        <taxon>Burkholderia</taxon>
        <taxon>pseudomallei group</taxon>
    </lineage>
</organism>